<protein>
    <recommendedName>
        <fullName evidence="2">Adenylosuccinate synthetase</fullName>
        <shortName evidence="2">AMPSase</shortName>
        <shortName evidence="2">AdSS</shortName>
        <ecNumber evidence="2">6.3.4.4</ecNumber>
    </recommendedName>
    <alternativeName>
        <fullName evidence="2">IMP--aspartate ligase</fullName>
    </alternativeName>
</protein>
<keyword id="KW-0963">Cytoplasm</keyword>
<keyword id="KW-0342">GTP-binding</keyword>
<keyword id="KW-0436">Ligase</keyword>
<keyword id="KW-0460">Magnesium</keyword>
<keyword id="KW-0479">Metal-binding</keyword>
<keyword id="KW-0547">Nucleotide-binding</keyword>
<keyword id="KW-0658">Purine biosynthesis</keyword>
<keyword id="KW-1185">Reference proteome</keyword>
<organism>
    <name type="scientific">Cryptococcus neoformans var. neoformans serotype D (strain JEC21 / ATCC MYA-565)</name>
    <name type="common">Filobasidiella neoformans</name>
    <dbReference type="NCBI Taxonomy" id="214684"/>
    <lineage>
        <taxon>Eukaryota</taxon>
        <taxon>Fungi</taxon>
        <taxon>Dikarya</taxon>
        <taxon>Basidiomycota</taxon>
        <taxon>Agaricomycotina</taxon>
        <taxon>Tremellomycetes</taxon>
        <taxon>Tremellales</taxon>
        <taxon>Cryptococcaceae</taxon>
        <taxon>Cryptococcus</taxon>
        <taxon>Cryptococcus neoformans species complex</taxon>
    </lineage>
</organism>
<gene>
    <name type="ordered locus">CNC04750</name>
</gene>
<dbReference type="EC" id="6.3.4.4" evidence="2"/>
<dbReference type="EMBL" id="AE017343">
    <property type="protein sequence ID" value="AAW42427.1"/>
    <property type="molecule type" value="Genomic_DNA"/>
</dbReference>
<dbReference type="RefSeq" id="XP_569734.1">
    <property type="nucleotide sequence ID" value="XM_569734.2"/>
</dbReference>
<dbReference type="SMR" id="P0CQ34"/>
<dbReference type="FunCoup" id="P0CQ34">
    <property type="interactions" value="548"/>
</dbReference>
<dbReference type="STRING" id="214684.P0CQ34"/>
<dbReference type="PaxDb" id="214684-P0CQ34"/>
<dbReference type="EnsemblFungi" id="AAW42427">
    <property type="protein sequence ID" value="AAW42427"/>
    <property type="gene ID" value="CNC04750"/>
</dbReference>
<dbReference type="GeneID" id="3256353"/>
<dbReference type="KEGG" id="cne:CNC04750"/>
<dbReference type="VEuPathDB" id="FungiDB:CNC04750"/>
<dbReference type="eggNOG" id="KOG1355">
    <property type="taxonomic scope" value="Eukaryota"/>
</dbReference>
<dbReference type="HOGENOM" id="CLU_029848_0_0_1"/>
<dbReference type="InParanoid" id="P0CQ34"/>
<dbReference type="OMA" id="FHHAKPI"/>
<dbReference type="OrthoDB" id="10265645at2759"/>
<dbReference type="UniPathway" id="UPA00075">
    <property type="reaction ID" value="UER00335"/>
</dbReference>
<dbReference type="Proteomes" id="UP000002149">
    <property type="component" value="Chromosome 3"/>
</dbReference>
<dbReference type="GO" id="GO:0005737">
    <property type="term" value="C:cytoplasm"/>
    <property type="evidence" value="ECO:0000318"/>
    <property type="project" value="GO_Central"/>
</dbReference>
<dbReference type="GO" id="GO:0004019">
    <property type="term" value="F:adenylosuccinate synthase activity"/>
    <property type="evidence" value="ECO:0000318"/>
    <property type="project" value="GO_Central"/>
</dbReference>
<dbReference type="GO" id="GO:0016208">
    <property type="term" value="F:AMP binding"/>
    <property type="evidence" value="ECO:0007669"/>
    <property type="project" value="EnsemblFungi"/>
</dbReference>
<dbReference type="GO" id="GO:0003688">
    <property type="term" value="F:DNA replication origin binding"/>
    <property type="evidence" value="ECO:0007669"/>
    <property type="project" value="EnsemblFungi"/>
</dbReference>
<dbReference type="GO" id="GO:0019002">
    <property type="term" value="F:GMP binding"/>
    <property type="evidence" value="ECO:0007669"/>
    <property type="project" value="EnsemblFungi"/>
</dbReference>
<dbReference type="GO" id="GO:0005525">
    <property type="term" value="F:GTP binding"/>
    <property type="evidence" value="ECO:0007669"/>
    <property type="project" value="UniProtKB-UniRule"/>
</dbReference>
<dbReference type="GO" id="GO:0000287">
    <property type="term" value="F:magnesium ion binding"/>
    <property type="evidence" value="ECO:0007669"/>
    <property type="project" value="UniProtKB-UniRule"/>
</dbReference>
<dbReference type="GO" id="GO:0044208">
    <property type="term" value="P:'de novo' AMP biosynthetic process"/>
    <property type="evidence" value="ECO:0000318"/>
    <property type="project" value="GO_Central"/>
</dbReference>
<dbReference type="GO" id="GO:0071276">
    <property type="term" value="P:cellular response to cadmium ion"/>
    <property type="evidence" value="ECO:0007669"/>
    <property type="project" value="EnsemblFungi"/>
</dbReference>
<dbReference type="GO" id="GO:0046040">
    <property type="term" value="P:IMP metabolic process"/>
    <property type="evidence" value="ECO:0000318"/>
    <property type="project" value="GO_Central"/>
</dbReference>
<dbReference type="CDD" id="cd03108">
    <property type="entry name" value="AdSS"/>
    <property type="match status" value="1"/>
</dbReference>
<dbReference type="FunFam" id="3.90.170.10:FF:000001">
    <property type="entry name" value="Adenylosuccinate synthetase"/>
    <property type="match status" value="1"/>
</dbReference>
<dbReference type="FunFam" id="1.10.300.10:FF:000002">
    <property type="entry name" value="Adenylosuccinate synthetase, chloroplastic"/>
    <property type="match status" value="1"/>
</dbReference>
<dbReference type="Gene3D" id="3.40.440.10">
    <property type="entry name" value="Adenylosuccinate Synthetase, subunit A, domain 1"/>
    <property type="match status" value="1"/>
</dbReference>
<dbReference type="Gene3D" id="1.10.300.10">
    <property type="entry name" value="Adenylosuccinate Synthetase, subunit A, domain 2"/>
    <property type="match status" value="1"/>
</dbReference>
<dbReference type="Gene3D" id="3.90.170.10">
    <property type="entry name" value="Adenylosuccinate Synthetase, subunit A, domain 3"/>
    <property type="match status" value="1"/>
</dbReference>
<dbReference type="HAMAP" id="MF_00011">
    <property type="entry name" value="Adenylosucc_synth"/>
    <property type="match status" value="1"/>
</dbReference>
<dbReference type="InterPro" id="IPR018220">
    <property type="entry name" value="Adenylosuccin_syn_GTP-bd"/>
</dbReference>
<dbReference type="InterPro" id="IPR033128">
    <property type="entry name" value="Adenylosuccin_syn_Lys_AS"/>
</dbReference>
<dbReference type="InterPro" id="IPR042109">
    <property type="entry name" value="Adenylosuccinate_synth_dom1"/>
</dbReference>
<dbReference type="InterPro" id="IPR042110">
    <property type="entry name" value="Adenylosuccinate_synth_dom2"/>
</dbReference>
<dbReference type="InterPro" id="IPR042111">
    <property type="entry name" value="Adenylosuccinate_synth_dom3"/>
</dbReference>
<dbReference type="InterPro" id="IPR001114">
    <property type="entry name" value="Adenylosuccinate_synthetase"/>
</dbReference>
<dbReference type="InterPro" id="IPR027417">
    <property type="entry name" value="P-loop_NTPase"/>
</dbReference>
<dbReference type="NCBIfam" id="NF002223">
    <property type="entry name" value="PRK01117.1"/>
    <property type="match status" value="1"/>
</dbReference>
<dbReference type="NCBIfam" id="TIGR00184">
    <property type="entry name" value="purA"/>
    <property type="match status" value="1"/>
</dbReference>
<dbReference type="PANTHER" id="PTHR11846">
    <property type="entry name" value="ADENYLOSUCCINATE SYNTHETASE"/>
    <property type="match status" value="1"/>
</dbReference>
<dbReference type="PANTHER" id="PTHR11846:SF0">
    <property type="entry name" value="ADENYLOSUCCINATE SYNTHETASE"/>
    <property type="match status" value="1"/>
</dbReference>
<dbReference type="Pfam" id="PF00709">
    <property type="entry name" value="Adenylsucc_synt"/>
    <property type="match status" value="1"/>
</dbReference>
<dbReference type="SMART" id="SM00788">
    <property type="entry name" value="Adenylsucc_synt"/>
    <property type="match status" value="1"/>
</dbReference>
<dbReference type="SUPFAM" id="SSF52540">
    <property type="entry name" value="P-loop containing nucleoside triphosphate hydrolases"/>
    <property type="match status" value="1"/>
</dbReference>
<dbReference type="PROSITE" id="PS01266">
    <property type="entry name" value="ADENYLOSUCCIN_SYN_1"/>
    <property type="match status" value="1"/>
</dbReference>
<dbReference type="PROSITE" id="PS00513">
    <property type="entry name" value="ADENYLOSUCCIN_SYN_2"/>
    <property type="match status" value="1"/>
</dbReference>
<reference key="1">
    <citation type="journal article" date="2005" name="Science">
        <title>The genome of the basidiomycetous yeast and human pathogen Cryptococcus neoformans.</title>
        <authorList>
            <person name="Loftus B.J."/>
            <person name="Fung E."/>
            <person name="Roncaglia P."/>
            <person name="Rowley D."/>
            <person name="Amedeo P."/>
            <person name="Bruno D."/>
            <person name="Vamathevan J."/>
            <person name="Miranda M."/>
            <person name="Anderson I.J."/>
            <person name="Fraser J.A."/>
            <person name="Allen J.E."/>
            <person name="Bosdet I.E."/>
            <person name="Brent M.R."/>
            <person name="Chiu R."/>
            <person name="Doering T.L."/>
            <person name="Donlin M.J."/>
            <person name="D'Souza C.A."/>
            <person name="Fox D.S."/>
            <person name="Grinberg V."/>
            <person name="Fu J."/>
            <person name="Fukushima M."/>
            <person name="Haas B.J."/>
            <person name="Huang J.C."/>
            <person name="Janbon G."/>
            <person name="Jones S.J.M."/>
            <person name="Koo H.L."/>
            <person name="Krzywinski M.I."/>
            <person name="Kwon-Chung K.J."/>
            <person name="Lengeler K.B."/>
            <person name="Maiti R."/>
            <person name="Marra M.A."/>
            <person name="Marra R.E."/>
            <person name="Mathewson C.A."/>
            <person name="Mitchell T.G."/>
            <person name="Pertea M."/>
            <person name="Riggs F.R."/>
            <person name="Salzberg S.L."/>
            <person name="Schein J.E."/>
            <person name="Shvartsbeyn A."/>
            <person name="Shin H."/>
            <person name="Shumway M."/>
            <person name="Specht C.A."/>
            <person name="Suh B.B."/>
            <person name="Tenney A."/>
            <person name="Utterback T.R."/>
            <person name="Wickes B.L."/>
            <person name="Wortman J.R."/>
            <person name="Wye N.H."/>
            <person name="Kronstad J.W."/>
            <person name="Lodge J.K."/>
            <person name="Heitman J."/>
            <person name="Davis R.W."/>
            <person name="Fraser C.M."/>
            <person name="Hyman R.W."/>
        </authorList>
    </citation>
    <scope>NUCLEOTIDE SEQUENCE [LARGE SCALE GENOMIC DNA]</scope>
    <source>
        <strain>JEC21 / ATCC MYA-565</strain>
    </source>
</reference>
<comment type="function">
    <text evidence="1">Plays an important role in the de novo pathway and in the salvage pathway of purine nucleotide biosynthesis. Catalyzes the first committed step in the biosynthesis of AMP from IMP (By similarity).</text>
</comment>
<comment type="catalytic activity">
    <reaction evidence="2">
        <text>IMP + L-aspartate + GTP = N(6)-(1,2-dicarboxyethyl)-AMP + GDP + phosphate + 2 H(+)</text>
        <dbReference type="Rhea" id="RHEA:15753"/>
        <dbReference type="ChEBI" id="CHEBI:15378"/>
        <dbReference type="ChEBI" id="CHEBI:29991"/>
        <dbReference type="ChEBI" id="CHEBI:37565"/>
        <dbReference type="ChEBI" id="CHEBI:43474"/>
        <dbReference type="ChEBI" id="CHEBI:57567"/>
        <dbReference type="ChEBI" id="CHEBI:58053"/>
        <dbReference type="ChEBI" id="CHEBI:58189"/>
        <dbReference type="EC" id="6.3.4.4"/>
    </reaction>
</comment>
<comment type="cofactor">
    <cofactor evidence="2">
        <name>Mg(2+)</name>
        <dbReference type="ChEBI" id="CHEBI:18420"/>
    </cofactor>
    <text evidence="2">Binds 1 Mg(2+) ion per subunit.</text>
</comment>
<comment type="pathway">
    <text evidence="2">Purine metabolism; AMP biosynthesis via de novo pathway; AMP from IMP: step 1/2.</text>
</comment>
<comment type="subunit">
    <text evidence="2">Homodimer.</text>
</comment>
<comment type="subcellular location">
    <subcellularLocation>
        <location evidence="2">Cytoplasm</location>
    </subcellularLocation>
</comment>
<comment type="similarity">
    <text evidence="2">Belongs to the adenylosuccinate synthetase family.</text>
</comment>
<proteinExistence type="inferred from homology"/>
<accession>P0CQ34</accession>
<accession>Q55W95</accession>
<accession>Q5KK02</accession>
<feature type="chain" id="PRO_0000399334" description="Adenylosuccinate synthetase">
    <location>
        <begin position="1"/>
        <end position="430"/>
    </location>
</feature>
<feature type="active site" description="Proton acceptor" evidence="2">
    <location>
        <position position="18"/>
    </location>
</feature>
<feature type="active site" description="Proton donor" evidence="2">
    <location>
        <position position="46"/>
    </location>
</feature>
<feature type="binding site" evidence="2">
    <location>
        <begin position="17"/>
        <end position="23"/>
    </location>
    <ligand>
        <name>GTP</name>
        <dbReference type="ChEBI" id="CHEBI:37565"/>
    </ligand>
</feature>
<feature type="binding site" description="in other chain" evidence="2">
    <location>
        <begin position="18"/>
        <end position="21"/>
    </location>
    <ligand>
        <name>IMP</name>
        <dbReference type="ChEBI" id="CHEBI:58053"/>
        <note>ligand shared between dimeric partners</note>
    </ligand>
</feature>
<feature type="binding site" evidence="2">
    <location>
        <position position="18"/>
    </location>
    <ligand>
        <name>Mg(2+)</name>
        <dbReference type="ChEBI" id="CHEBI:18420"/>
    </ligand>
</feature>
<feature type="binding site" description="in other chain" evidence="2">
    <location>
        <begin position="43"/>
        <end position="46"/>
    </location>
    <ligand>
        <name>IMP</name>
        <dbReference type="ChEBI" id="CHEBI:58053"/>
        <note>ligand shared between dimeric partners</note>
    </ligand>
</feature>
<feature type="binding site" evidence="2">
    <location>
        <begin position="45"/>
        <end position="47"/>
    </location>
    <ligand>
        <name>GTP</name>
        <dbReference type="ChEBI" id="CHEBI:37565"/>
    </ligand>
</feature>
<feature type="binding site" evidence="2">
    <location>
        <position position="45"/>
    </location>
    <ligand>
        <name>Mg(2+)</name>
        <dbReference type="ChEBI" id="CHEBI:18420"/>
    </ligand>
</feature>
<feature type="binding site" description="in other chain" evidence="2">
    <location>
        <position position="139"/>
    </location>
    <ligand>
        <name>IMP</name>
        <dbReference type="ChEBI" id="CHEBI:58053"/>
        <note>ligand shared between dimeric partners</note>
    </ligand>
</feature>
<feature type="binding site" evidence="2">
    <location>
        <position position="153"/>
    </location>
    <ligand>
        <name>IMP</name>
        <dbReference type="ChEBI" id="CHEBI:58053"/>
        <note>ligand shared between dimeric partners</note>
    </ligand>
</feature>
<feature type="binding site" description="in other chain" evidence="2">
    <location>
        <position position="229"/>
    </location>
    <ligand>
        <name>IMP</name>
        <dbReference type="ChEBI" id="CHEBI:58053"/>
        <note>ligand shared between dimeric partners</note>
    </ligand>
</feature>
<feature type="binding site" description="in other chain" evidence="2">
    <location>
        <position position="244"/>
    </location>
    <ligand>
        <name>IMP</name>
        <dbReference type="ChEBI" id="CHEBI:58053"/>
        <note>ligand shared between dimeric partners</note>
    </ligand>
</feature>
<feature type="binding site" evidence="2">
    <location>
        <begin position="304"/>
        <end position="310"/>
    </location>
    <ligand>
        <name>substrate</name>
    </ligand>
</feature>
<feature type="binding site" description="in other chain" evidence="2">
    <location>
        <position position="308"/>
    </location>
    <ligand>
        <name>IMP</name>
        <dbReference type="ChEBI" id="CHEBI:58053"/>
        <note>ligand shared between dimeric partners</note>
    </ligand>
</feature>
<feature type="binding site" evidence="2">
    <location>
        <position position="310"/>
    </location>
    <ligand>
        <name>GTP</name>
        <dbReference type="ChEBI" id="CHEBI:37565"/>
    </ligand>
</feature>
<feature type="binding site" evidence="2">
    <location>
        <begin position="336"/>
        <end position="338"/>
    </location>
    <ligand>
        <name>GTP</name>
        <dbReference type="ChEBI" id="CHEBI:37565"/>
    </ligand>
</feature>
<feature type="binding site" evidence="2">
    <location>
        <begin position="418"/>
        <end position="420"/>
    </location>
    <ligand>
        <name>GTP</name>
        <dbReference type="ChEBI" id="CHEBI:37565"/>
    </ligand>
</feature>
<evidence type="ECO:0000250" key="1"/>
<evidence type="ECO:0000255" key="2">
    <source>
        <dbReference type="HAMAP-Rule" id="MF_03125"/>
    </source>
</evidence>
<name>PURA_CRYNJ</name>
<sequence>MAPSPEGVTVVLGAQWGDEGKGKLVDILAAEADICARCAGGNNAGHTIVVRNDKGEKTSYAFNLLPSGLINPECTAFIGSGVVVHVPSLFNELDTLERKGLKVAGRLFVSDRAHLVMGFHQIVDGLKEVELGGSSIGTTRKGIGPAYSSKASRSGLRVHHLFDPTFPAKFRKLVEGRFKRYGHFEFDTEGEIEMYLAFAERLRPFIVDGPTFMHNAVNSGKRVLVEGANALMLDLDYGTYPFVTSSSTSIGGVVSGLGISPFAIKRVVGVIKAYTTRVGGGPFPTEDLATVGETLQEVGAEYGTVTGRRRRCGWLDLVVMKYSTMINGYTSLNLTKLDVLDGFDEIKVATGYKIDGVEVEGFPADLDRLAKVEVQYATLPGWKTDISNCKTYEEFPENAKAYIKFIEDYLGVKVQYVGVGPGRDQNVIIF</sequence>